<reference key="1">
    <citation type="journal article" date="2010" name="J. Bacteriol.">
        <title>Complete genome sequence of the aerobic facultative methanotroph Methylocella silvestris BL2.</title>
        <authorList>
            <person name="Chen Y."/>
            <person name="Crombie A."/>
            <person name="Rahman M.T."/>
            <person name="Dedysh S.N."/>
            <person name="Liesack W."/>
            <person name="Stott M.B."/>
            <person name="Alam M."/>
            <person name="Theisen A.R."/>
            <person name="Murrell J.C."/>
            <person name="Dunfield P.F."/>
        </authorList>
    </citation>
    <scope>NUCLEOTIDE SEQUENCE [LARGE SCALE GENOMIC DNA]</scope>
    <source>
        <strain>DSM 15510 / CIP 108128 / LMG 27833 / NCIMB 13906 / BL2</strain>
    </source>
</reference>
<evidence type="ECO:0000255" key="1">
    <source>
        <dbReference type="HAMAP-Rule" id="MF_01690"/>
    </source>
</evidence>
<gene>
    <name evidence="1" type="primary">dapE</name>
    <name type="ordered locus">Msil_1021</name>
</gene>
<feature type="chain" id="PRO_0000375618" description="Succinyl-diaminopimelate desuccinylase">
    <location>
        <begin position="1"/>
        <end position="388"/>
    </location>
</feature>
<feature type="active site" evidence="1">
    <location>
        <position position="77"/>
    </location>
</feature>
<feature type="active site" description="Proton acceptor" evidence="1">
    <location>
        <position position="142"/>
    </location>
</feature>
<feature type="binding site" evidence="1">
    <location>
        <position position="75"/>
    </location>
    <ligand>
        <name>Zn(2+)</name>
        <dbReference type="ChEBI" id="CHEBI:29105"/>
        <label>1</label>
    </ligand>
</feature>
<feature type="binding site" evidence="1">
    <location>
        <position position="108"/>
    </location>
    <ligand>
        <name>Zn(2+)</name>
        <dbReference type="ChEBI" id="CHEBI:29105"/>
        <label>1</label>
    </ligand>
</feature>
<feature type="binding site" evidence="1">
    <location>
        <position position="108"/>
    </location>
    <ligand>
        <name>Zn(2+)</name>
        <dbReference type="ChEBI" id="CHEBI:29105"/>
        <label>2</label>
    </ligand>
</feature>
<feature type="binding site" evidence="1">
    <location>
        <position position="143"/>
    </location>
    <ligand>
        <name>Zn(2+)</name>
        <dbReference type="ChEBI" id="CHEBI:29105"/>
        <label>2</label>
    </ligand>
</feature>
<feature type="binding site" evidence="1">
    <location>
        <position position="171"/>
    </location>
    <ligand>
        <name>Zn(2+)</name>
        <dbReference type="ChEBI" id="CHEBI:29105"/>
        <label>1</label>
    </ligand>
</feature>
<feature type="binding site" evidence="1">
    <location>
        <position position="361"/>
    </location>
    <ligand>
        <name>Zn(2+)</name>
        <dbReference type="ChEBI" id="CHEBI:29105"/>
        <label>2</label>
    </ligand>
</feature>
<protein>
    <recommendedName>
        <fullName evidence="1">Succinyl-diaminopimelate desuccinylase</fullName>
        <shortName evidence="1">SDAP desuccinylase</shortName>
        <ecNumber evidence="1">3.5.1.18</ecNumber>
    </recommendedName>
    <alternativeName>
        <fullName evidence="1">N-succinyl-LL-2,6-diaminoheptanedioate amidohydrolase</fullName>
    </alternativeName>
</protein>
<keyword id="KW-0028">Amino-acid biosynthesis</keyword>
<keyword id="KW-0170">Cobalt</keyword>
<keyword id="KW-0220">Diaminopimelate biosynthesis</keyword>
<keyword id="KW-0378">Hydrolase</keyword>
<keyword id="KW-0457">Lysine biosynthesis</keyword>
<keyword id="KW-0479">Metal-binding</keyword>
<keyword id="KW-1185">Reference proteome</keyword>
<keyword id="KW-0862">Zinc</keyword>
<organism>
    <name type="scientific">Methylocella silvestris (strain DSM 15510 / CIP 108128 / LMG 27833 / NCIMB 13906 / BL2)</name>
    <dbReference type="NCBI Taxonomy" id="395965"/>
    <lineage>
        <taxon>Bacteria</taxon>
        <taxon>Pseudomonadati</taxon>
        <taxon>Pseudomonadota</taxon>
        <taxon>Alphaproteobacteria</taxon>
        <taxon>Hyphomicrobiales</taxon>
        <taxon>Beijerinckiaceae</taxon>
        <taxon>Methylocella</taxon>
    </lineage>
</organism>
<comment type="function">
    <text evidence="1">Catalyzes the hydrolysis of N-succinyl-L,L-diaminopimelic acid (SDAP), forming succinate and LL-2,6-diaminopimelate (DAP), an intermediate involved in the bacterial biosynthesis of lysine and meso-diaminopimelic acid, an essential component of bacterial cell walls.</text>
</comment>
<comment type="catalytic activity">
    <reaction evidence="1">
        <text>N-succinyl-(2S,6S)-2,6-diaminopimelate + H2O = (2S,6S)-2,6-diaminopimelate + succinate</text>
        <dbReference type="Rhea" id="RHEA:22608"/>
        <dbReference type="ChEBI" id="CHEBI:15377"/>
        <dbReference type="ChEBI" id="CHEBI:30031"/>
        <dbReference type="ChEBI" id="CHEBI:57609"/>
        <dbReference type="ChEBI" id="CHEBI:58087"/>
        <dbReference type="EC" id="3.5.1.18"/>
    </reaction>
</comment>
<comment type="cofactor">
    <cofactor evidence="1">
        <name>Zn(2+)</name>
        <dbReference type="ChEBI" id="CHEBI:29105"/>
    </cofactor>
    <cofactor evidence="1">
        <name>Co(2+)</name>
        <dbReference type="ChEBI" id="CHEBI:48828"/>
    </cofactor>
    <text evidence="1">Binds 2 Zn(2+) or Co(2+) ions per subunit.</text>
</comment>
<comment type="pathway">
    <text evidence="1">Amino-acid biosynthesis; L-lysine biosynthesis via DAP pathway; LL-2,6-diaminopimelate from (S)-tetrahydrodipicolinate (succinylase route): step 3/3.</text>
</comment>
<comment type="subunit">
    <text evidence="1">Homodimer.</text>
</comment>
<comment type="similarity">
    <text evidence="1">Belongs to the peptidase M20A family. DapE subfamily.</text>
</comment>
<proteinExistence type="inferred from homology"/>
<name>DAPE_METSB</name>
<accession>B8ELJ6</accession>
<sequence length="388" mass="41153">MSDLAHTAVELCRELLRRPSVTPLDAGAQDFLAAKLREAGFATHSVVFSDESTPDIQNLYARAGAGGRHLVFAGHTDVVPPGDSASWRFDPFGGEMEGGLIFGRGAVDMKGAIAAFAAAAMAFVAEGGAQKGSISFLITGDEEGPAINGTDKLLRWAHQRGERFDHCILGEPTNQQALGDMIKIGRRGSLNGTLTVKGVQGHVAYPHRAKNPIPHLMRLLAALTAEPLDQGTELFDASNLEIVSVDVGNPTFNVIPAEARARFNIRFNDIWTPDALAAELRARAEKAGAAAGAASALHFEPCNALAFVTQPDAFTDLVSAAIEQATGRKPKLSTSGGTSDARFIRAYCPVLEFGLVGSTMHAVDERAPVEDISALASIYADILNSYFK</sequence>
<dbReference type="EC" id="3.5.1.18" evidence="1"/>
<dbReference type="EMBL" id="CP001280">
    <property type="protein sequence ID" value="ACK49990.1"/>
    <property type="molecule type" value="Genomic_DNA"/>
</dbReference>
<dbReference type="RefSeq" id="WP_012590060.1">
    <property type="nucleotide sequence ID" value="NC_011666.1"/>
</dbReference>
<dbReference type="SMR" id="B8ELJ6"/>
<dbReference type="STRING" id="395965.Msil_1021"/>
<dbReference type="KEGG" id="msl:Msil_1021"/>
<dbReference type="eggNOG" id="COG0624">
    <property type="taxonomic scope" value="Bacteria"/>
</dbReference>
<dbReference type="HOGENOM" id="CLU_021802_4_0_5"/>
<dbReference type="OrthoDB" id="9809784at2"/>
<dbReference type="UniPathway" id="UPA00034">
    <property type="reaction ID" value="UER00021"/>
</dbReference>
<dbReference type="Proteomes" id="UP000002257">
    <property type="component" value="Chromosome"/>
</dbReference>
<dbReference type="GO" id="GO:0008777">
    <property type="term" value="F:acetylornithine deacetylase activity"/>
    <property type="evidence" value="ECO:0007669"/>
    <property type="project" value="TreeGrafter"/>
</dbReference>
<dbReference type="GO" id="GO:0050897">
    <property type="term" value="F:cobalt ion binding"/>
    <property type="evidence" value="ECO:0007669"/>
    <property type="project" value="UniProtKB-UniRule"/>
</dbReference>
<dbReference type="GO" id="GO:0009014">
    <property type="term" value="F:succinyl-diaminopimelate desuccinylase activity"/>
    <property type="evidence" value="ECO:0007669"/>
    <property type="project" value="UniProtKB-UniRule"/>
</dbReference>
<dbReference type="GO" id="GO:0008270">
    <property type="term" value="F:zinc ion binding"/>
    <property type="evidence" value="ECO:0007669"/>
    <property type="project" value="UniProtKB-UniRule"/>
</dbReference>
<dbReference type="GO" id="GO:0019877">
    <property type="term" value="P:diaminopimelate biosynthetic process"/>
    <property type="evidence" value="ECO:0007669"/>
    <property type="project" value="UniProtKB-UniRule"/>
</dbReference>
<dbReference type="GO" id="GO:0006526">
    <property type="term" value="P:L-arginine biosynthetic process"/>
    <property type="evidence" value="ECO:0007669"/>
    <property type="project" value="TreeGrafter"/>
</dbReference>
<dbReference type="GO" id="GO:0009089">
    <property type="term" value="P:lysine biosynthetic process via diaminopimelate"/>
    <property type="evidence" value="ECO:0007669"/>
    <property type="project" value="UniProtKB-UniRule"/>
</dbReference>
<dbReference type="CDD" id="cd03891">
    <property type="entry name" value="M20_DapE_proteobac"/>
    <property type="match status" value="1"/>
</dbReference>
<dbReference type="Gene3D" id="3.40.630.10">
    <property type="entry name" value="Zn peptidases"/>
    <property type="match status" value="2"/>
</dbReference>
<dbReference type="HAMAP" id="MF_01690">
    <property type="entry name" value="DapE"/>
    <property type="match status" value="1"/>
</dbReference>
<dbReference type="InterPro" id="IPR001261">
    <property type="entry name" value="ArgE/DapE_CS"/>
</dbReference>
<dbReference type="InterPro" id="IPR036264">
    <property type="entry name" value="Bact_exopeptidase_dim_dom"/>
</dbReference>
<dbReference type="InterPro" id="IPR005941">
    <property type="entry name" value="DapE_proteobac"/>
</dbReference>
<dbReference type="InterPro" id="IPR002933">
    <property type="entry name" value="Peptidase_M20"/>
</dbReference>
<dbReference type="InterPro" id="IPR011650">
    <property type="entry name" value="Peptidase_M20_dimer"/>
</dbReference>
<dbReference type="InterPro" id="IPR050072">
    <property type="entry name" value="Peptidase_M20A"/>
</dbReference>
<dbReference type="NCBIfam" id="TIGR01246">
    <property type="entry name" value="dapE_proteo"/>
    <property type="match status" value="1"/>
</dbReference>
<dbReference type="NCBIfam" id="NF009557">
    <property type="entry name" value="PRK13009.1"/>
    <property type="match status" value="1"/>
</dbReference>
<dbReference type="PANTHER" id="PTHR43808">
    <property type="entry name" value="ACETYLORNITHINE DEACETYLASE"/>
    <property type="match status" value="1"/>
</dbReference>
<dbReference type="PANTHER" id="PTHR43808:SF31">
    <property type="entry name" value="N-ACETYL-L-CITRULLINE DEACETYLASE"/>
    <property type="match status" value="1"/>
</dbReference>
<dbReference type="Pfam" id="PF07687">
    <property type="entry name" value="M20_dimer"/>
    <property type="match status" value="1"/>
</dbReference>
<dbReference type="Pfam" id="PF01546">
    <property type="entry name" value="Peptidase_M20"/>
    <property type="match status" value="1"/>
</dbReference>
<dbReference type="SUPFAM" id="SSF55031">
    <property type="entry name" value="Bacterial exopeptidase dimerisation domain"/>
    <property type="match status" value="1"/>
</dbReference>
<dbReference type="SUPFAM" id="SSF53187">
    <property type="entry name" value="Zn-dependent exopeptidases"/>
    <property type="match status" value="1"/>
</dbReference>
<dbReference type="PROSITE" id="PS00759">
    <property type="entry name" value="ARGE_DAPE_CPG2_2"/>
    <property type="match status" value="1"/>
</dbReference>